<accession>B7IHT3</accession>
<organism>
    <name type="scientific">Thermosipho africanus (strain TCF52B)</name>
    <dbReference type="NCBI Taxonomy" id="484019"/>
    <lineage>
        <taxon>Bacteria</taxon>
        <taxon>Thermotogati</taxon>
        <taxon>Thermotogota</taxon>
        <taxon>Thermotogae</taxon>
        <taxon>Thermotogales</taxon>
        <taxon>Fervidobacteriaceae</taxon>
        <taxon>Thermosipho</taxon>
    </lineage>
</organism>
<protein>
    <recommendedName>
        <fullName evidence="1">Small ribosomal subunit protein uS2</fullName>
    </recommendedName>
    <alternativeName>
        <fullName evidence="3">30S ribosomal protein S2</fullName>
    </alternativeName>
</protein>
<reference key="1">
    <citation type="journal article" date="2009" name="J. Bacteriol.">
        <title>The genome of Thermosipho africanus TCF52B: lateral genetic connections to the Firmicutes and Archaea.</title>
        <authorList>
            <person name="Nesboe C.L."/>
            <person name="Bapteste E."/>
            <person name="Curtis B."/>
            <person name="Dahle H."/>
            <person name="Lopez P."/>
            <person name="Macleod D."/>
            <person name="Dlutek M."/>
            <person name="Bowman S."/>
            <person name="Zhaxybayeva O."/>
            <person name="Birkeland N.-K."/>
            <person name="Doolittle W.F."/>
        </authorList>
    </citation>
    <scope>NUCLEOTIDE SEQUENCE [LARGE SCALE GENOMIC DNA]</scope>
    <source>
        <strain>TCF52B</strain>
    </source>
</reference>
<gene>
    <name evidence="1" type="primary">rpsB</name>
    <name type="ordered locus">THA_1197</name>
</gene>
<name>RS2_THEAB</name>
<comment type="similarity">
    <text evidence="1">Belongs to the universal ribosomal protein uS2 family.</text>
</comment>
<proteinExistence type="inferred from homology"/>
<keyword id="KW-1185">Reference proteome</keyword>
<keyword id="KW-0687">Ribonucleoprotein</keyword>
<keyword id="KW-0689">Ribosomal protein</keyword>
<dbReference type="EMBL" id="CP001185">
    <property type="protein sequence ID" value="ACJ75647.1"/>
    <property type="molecule type" value="Genomic_DNA"/>
</dbReference>
<dbReference type="RefSeq" id="WP_012580075.1">
    <property type="nucleotide sequence ID" value="NC_011653.1"/>
</dbReference>
<dbReference type="SMR" id="B7IHT3"/>
<dbReference type="STRING" id="484019.THA_1197"/>
<dbReference type="KEGG" id="taf:THA_1197"/>
<dbReference type="eggNOG" id="COG0052">
    <property type="taxonomic scope" value="Bacteria"/>
</dbReference>
<dbReference type="HOGENOM" id="CLU_040318_1_2_0"/>
<dbReference type="OrthoDB" id="9808036at2"/>
<dbReference type="Proteomes" id="UP000002453">
    <property type="component" value="Chromosome"/>
</dbReference>
<dbReference type="GO" id="GO:0022627">
    <property type="term" value="C:cytosolic small ribosomal subunit"/>
    <property type="evidence" value="ECO:0007669"/>
    <property type="project" value="TreeGrafter"/>
</dbReference>
<dbReference type="GO" id="GO:0003735">
    <property type="term" value="F:structural constituent of ribosome"/>
    <property type="evidence" value="ECO:0007669"/>
    <property type="project" value="InterPro"/>
</dbReference>
<dbReference type="GO" id="GO:0006412">
    <property type="term" value="P:translation"/>
    <property type="evidence" value="ECO:0007669"/>
    <property type="project" value="UniProtKB-UniRule"/>
</dbReference>
<dbReference type="CDD" id="cd01425">
    <property type="entry name" value="RPS2"/>
    <property type="match status" value="1"/>
</dbReference>
<dbReference type="FunFam" id="1.10.287.610:FF:000001">
    <property type="entry name" value="30S ribosomal protein S2"/>
    <property type="match status" value="1"/>
</dbReference>
<dbReference type="Gene3D" id="3.40.50.10490">
    <property type="entry name" value="Glucose-6-phosphate isomerase like protein, domain 1"/>
    <property type="match status" value="1"/>
</dbReference>
<dbReference type="Gene3D" id="1.10.287.610">
    <property type="entry name" value="Helix hairpin bin"/>
    <property type="match status" value="1"/>
</dbReference>
<dbReference type="HAMAP" id="MF_00291_B">
    <property type="entry name" value="Ribosomal_uS2_B"/>
    <property type="match status" value="1"/>
</dbReference>
<dbReference type="InterPro" id="IPR001865">
    <property type="entry name" value="Ribosomal_uS2"/>
</dbReference>
<dbReference type="InterPro" id="IPR005706">
    <property type="entry name" value="Ribosomal_uS2_bac/mit/plastid"/>
</dbReference>
<dbReference type="InterPro" id="IPR018130">
    <property type="entry name" value="Ribosomal_uS2_CS"/>
</dbReference>
<dbReference type="InterPro" id="IPR023591">
    <property type="entry name" value="Ribosomal_uS2_flav_dom_sf"/>
</dbReference>
<dbReference type="NCBIfam" id="TIGR01011">
    <property type="entry name" value="rpsB_bact"/>
    <property type="match status" value="1"/>
</dbReference>
<dbReference type="PANTHER" id="PTHR12534">
    <property type="entry name" value="30S RIBOSOMAL PROTEIN S2 PROKARYOTIC AND ORGANELLAR"/>
    <property type="match status" value="1"/>
</dbReference>
<dbReference type="PANTHER" id="PTHR12534:SF0">
    <property type="entry name" value="SMALL RIBOSOMAL SUBUNIT PROTEIN US2M"/>
    <property type="match status" value="1"/>
</dbReference>
<dbReference type="Pfam" id="PF00318">
    <property type="entry name" value="Ribosomal_S2"/>
    <property type="match status" value="1"/>
</dbReference>
<dbReference type="PRINTS" id="PR00395">
    <property type="entry name" value="RIBOSOMALS2"/>
</dbReference>
<dbReference type="SUPFAM" id="SSF52313">
    <property type="entry name" value="Ribosomal protein S2"/>
    <property type="match status" value="1"/>
</dbReference>
<dbReference type="PROSITE" id="PS00962">
    <property type="entry name" value="RIBOSOMAL_S2_1"/>
    <property type="match status" value="1"/>
</dbReference>
<feature type="chain" id="PRO_1000119433" description="Small ribosomal subunit protein uS2">
    <location>
        <begin position="1"/>
        <end position="259"/>
    </location>
</feature>
<feature type="region of interest" description="Disordered" evidence="2">
    <location>
        <begin position="228"/>
        <end position="259"/>
    </location>
</feature>
<feature type="compositionally biased region" description="Acidic residues" evidence="2">
    <location>
        <begin position="233"/>
        <end position="259"/>
    </location>
</feature>
<evidence type="ECO:0000255" key="1">
    <source>
        <dbReference type="HAMAP-Rule" id="MF_00291"/>
    </source>
</evidence>
<evidence type="ECO:0000256" key="2">
    <source>
        <dbReference type="SAM" id="MobiDB-lite"/>
    </source>
</evidence>
<evidence type="ECO:0000305" key="3"/>
<sequence length="259" mass="29736">MAVLTMKQLLEAGVHFGHRTQRWNPKMKEYIFGARKGIYIIDLQKTSKLLDEAYNFVRDKAAEGGTILFVGTKKQAQQVIKQEAERCGAFYVNHRWLGGLLTNFETIRKRIDKLIELEEMEANGEFDHLPKKEQSRLRRILEKLRKNLGGLKNMTSLPDVIYIVDPRKERNAVYEANLLKIPTVAIVDTNCDPDEIDYIIPGNDDAIRAIQLITSKIADAYLEGREGVSFGSEEAEENNQKEDNEEIFEIEDVDESEEM</sequence>